<feature type="initiator methionine" description="Removed" evidence="2">
    <location>
        <position position="1"/>
    </location>
</feature>
<feature type="chain" id="PRO_0000211470" description="Charged multivesicular body protein 2b">
    <location>
        <begin position="2"/>
        <end position="213"/>
    </location>
</feature>
<feature type="region of interest" description="Disordered" evidence="4">
    <location>
        <begin position="179"/>
        <end position="199"/>
    </location>
</feature>
<feature type="coiled-coil region" evidence="3">
    <location>
        <begin position="25"/>
        <end position="55"/>
    </location>
</feature>
<feature type="short sequence motif" description="MIT-interacting motif">
    <location>
        <begin position="201"/>
        <end position="211"/>
    </location>
</feature>
<feature type="compositionally biased region" description="Low complexity" evidence="4">
    <location>
        <begin position="179"/>
        <end position="194"/>
    </location>
</feature>
<feature type="modified residue" description="N-acetylalanine" evidence="2">
    <location>
        <position position="2"/>
    </location>
</feature>
<feature type="modified residue" description="Phosphoserine" evidence="7 8 9">
    <location>
        <position position="199"/>
    </location>
</feature>
<feature type="sequence conflict" description="In Ref. 1; BAB23339." evidence="6" ref="1">
    <original>E</original>
    <variation>D</variation>
    <location>
        <position position="131"/>
    </location>
</feature>
<reference key="1">
    <citation type="journal article" date="2005" name="Science">
        <title>The transcriptional landscape of the mammalian genome.</title>
        <authorList>
            <person name="Carninci P."/>
            <person name="Kasukawa T."/>
            <person name="Katayama S."/>
            <person name="Gough J."/>
            <person name="Frith M.C."/>
            <person name="Maeda N."/>
            <person name="Oyama R."/>
            <person name="Ravasi T."/>
            <person name="Lenhard B."/>
            <person name="Wells C."/>
            <person name="Kodzius R."/>
            <person name="Shimokawa K."/>
            <person name="Bajic V.B."/>
            <person name="Brenner S.E."/>
            <person name="Batalov S."/>
            <person name="Forrest A.R."/>
            <person name="Zavolan M."/>
            <person name="Davis M.J."/>
            <person name="Wilming L.G."/>
            <person name="Aidinis V."/>
            <person name="Allen J.E."/>
            <person name="Ambesi-Impiombato A."/>
            <person name="Apweiler R."/>
            <person name="Aturaliya R.N."/>
            <person name="Bailey T.L."/>
            <person name="Bansal M."/>
            <person name="Baxter L."/>
            <person name="Beisel K.W."/>
            <person name="Bersano T."/>
            <person name="Bono H."/>
            <person name="Chalk A.M."/>
            <person name="Chiu K.P."/>
            <person name="Choudhary V."/>
            <person name="Christoffels A."/>
            <person name="Clutterbuck D.R."/>
            <person name="Crowe M.L."/>
            <person name="Dalla E."/>
            <person name="Dalrymple B.P."/>
            <person name="de Bono B."/>
            <person name="Della Gatta G."/>
            <person name="di Bernardo D."/>
            <person name="Down T."/>
            <person name="Engstrom P."/>
            <person name="Fagiolini M."/>
            <person name="Faulkner G."/>
            <person name="Fletcher C.F."/>
            <person name="Fukushima T."/>
            <person name="Furuno M."/>
            <person name="Futaki S."/>
            <person name="Gariboldi M."/>
            <person name="Georgii-Hemming P."/>
            <person name="Gingeras T.R."/>
            <person name="Gojobori T."/>
            <person name="Green R.E."/>
            <person name="Gustincich S."/>
            <person name="Harbers M."/>
            <person name="Hayashi Y."/>
            <person name="Hensch T.K."/>
            <person name="Hirokawa N."/>
            <person name="Hill D."/>
            <person name="Huminiecki L."/>
            <person name="Iacono M."/>
            <person name="Ikeo K."/>
            <person name="Iwama A."/>
            <person name="Ishikawa T."/>
            <person name="Jakt M."/>
            <person name="Kanapin A."/>
            <person name="Katoh M."/>
            <person name="Kawasawa Y."/>
            <person name="Kelso J."/>
            <person name="Kitamura H."/>
            <person name="Kitano H."/>
            <person name="Kollias G."/>
            <person name="Krishnan S.P."/>
            <person name="Kruger A."/>
            <person name="Kummerfeld S.K."/>
            <person name="Kurochkin I.V."/>
            <person name="Lareau L.F."/>
            <person name="Lazarevic D."/>
            <person name="Lipovich L."/>
            <person name="Liu J."/>
            <person name="Liuni S."/>
            <person name="McWilliam S."/>
            <person name="Madan Babu M."/>
            <person name="Madera M."/>
            <person name="Marchionni L."/>
            <person name="Matsuda H."/>
            <person name="Matsuzawa S."/>
            <person name="Miki H."/>
            <person name="Mignone F."/>
            <person name="Miyake S."/>
            <person name="Morris K."/>
            <person name="Mottagui-Tabar S."/>
            <person name="Mulder N."/>
            <person name="Nakano N."/>
            <person name="Nakauchi H."/>
            <person name="Ng P."/>
            <person name="Nilsson R."/>
            <person name="Nishiguchi S."/>
            <person name="Nishikawa S."/>
            <person name="Nori F."/>
            <person name="Ohara O."/>
            <person name="Okazaki Y."/>
            <person name="Orlando V."/>
            <person name="Pang K.C."/>
            <person name="Pavan W.J."/>
            <person name="Pavesi G."/>
            <person name="Pesole G."/>
            <person name="Petrovsky N."/>
            <person name="Piazza S."/>
            <person name="Reed J."/>
            <person name="Reid J.F."/>
            <person name="Ring B.Z."/>
            <person name="Ringwald M."/>
            <person name="Rost B."/>
            <person name="Ruan Y."/>
            <person name="Salzberg S.L."/>
            <person name="Sandelin A."/>
            <person name="Schneider C."/>
            <person name="Schoenbach C."/>
            <person name="Sekiguchi K."/>
            <person name="Semple C.A."/>
            <person name="Seno S."/>
            <person name="Sessa L."/>
            <person name="Sheng Y."/>
            <person name="Shibata Y."/>
            <person name="Shimada H."/>
            <person name="Shimada K."/>
            <person name="Silva D."/>
            <person name="Sinclair B."/>
            <person name="Sperling S."/>
            <person name="Stupka E."/>
            <person name="Sugiura K."/>
            <person name="Sultana R."/>
            <person name="Takenaka Y."/>
            <person name="Taki K."/>
            <person name="Tammoja K."/>
            <person name="Tan S.L."/>
            <person name="Tang S."/>
            <person name="Taylor M.S."/>
            <person name="Tegner J."/>
            <person name="Teichmann S.A."/>
            <person name="Ueda H.R."/>
            <person name="van Nimwegen E."/>
            <person name="Verardo R."/>
            <person name="Wei C.L."/>
            <person name="Yagi K."/>
            <person name="Yamanishi H."/>
            <person name="Zabarovsky E."/>
            <person name="Zhu S."/>
            <person name="Zimmer A."/>
            <person name="Hide W."/>
            <person name="Bult C."/>
            <person name="Grimmond S.M."/>
            <person name="Teasdale R.D."/>
            <person name="Liu E.T."/>
            <person name="Brusic V."/>
            <person name="Quackenbush J."/>
            <person name="Wahlestedt C."/>
            <person name="Mattick J.S."/>
            <person name="Hume D.A."/>
            <person name="Kai C."/>
            <person name="Sasaki D."/>
            <person name="Tomaru Y."/>
            <person name="Fukuda S."/>
            <person name="Kanamori-Katayama M."/>
            <person name="Suzuki M."/>
            <person name="Aoki J."/>
            <person name="Arakawa T."/>
            <person name="Iida J."/>
            <person name="Imamura K."/>
            <person name="Itoh M."/>
            <person name="Kato T."/>
            <person name="Kawaji H."/>
            <person name="Kawagashira N."/>
            <person name="Kawashima T."/>
            <person name="Kojima M."/>
            <person name="Kondo S."/>
            <person name="Konno H."/>
            <person name="Nakano K."/>
            <person name="Ninomiya N."/>
            <person name="Nishio T."/>
            <person name="Okada M."/>
            <person name="Plessy C."/>
            <person name="Shibata K."/>
            <person name="Shiraki T."/>
            <person name="Suzuki S."/>
            <person name="Tagami M."/>
            <person name="Waki K."/>
            <person name="Watahiki A."/>
            <person name="Okamura-Oho Y."/>
            <person name="Suzuki H."/>
            <person name="Kawai J."/>
            <person name="Hayashizaki Y."/>
        </authorList>
    </citation>
    <scope>NUCLEOTIDE SEQUENCE [LARGE SCALE MRNA]</scope>
    <source>
        <strain>C57BL/6J</strain>
        <tissue>Spinal ganglion</tissue>
    </source>
</reference>
<reference key="2">
    <citation type="journal article" date="2004" name="Genome Res.">
        <title>The status, quality, and expansion of the NIH full-length cDNA project: the Mammalian Gene Collection (MGC).</title>
        <authorList>
            <consortium name="The MGC Project Team"/>
        </authorList>
    </citation>
    <scope>NUCLEOTIDE SEQUENCE [LARGE SCALE MRNA]</scope>
    <source>
        <strain>C57BL/6J</strain>
        <strain>Czech II</strain>
        <tissue>Brain</tissue>
        <tissue>Mammary tumor</tissue>
    </source>
</reference>
<reference key="3">
    <citation type="journal article" date="2005" name="Nat. Genet.">
        <title>Mutations in the endosomal ESCRTIII-complex subunit CHMP2B in frontotemporal dementia.</title>
        <authorList>
            <person name="Skibinski G."/>
            <person name="Parkinson N.J."/>
            <person name="Brown J.M."/>
            <person name="Chakrabarti L."/>
            <person name="Lloyd S.L."/>
            <person name="Hummerich H."/>
            <person name="Nielsen J.E."/>
            <person name="Hodges J.R."/>
            <person name="Spillantini M.G."/>
            <person name="Thusgaard T."/>
            <person name="Brandner S."/>
            <person name="Brun A."/>
            <person name="Rossor M.N."/>
            <person name="Gade A."/>
            <person name="Johannsen P."/>
            <person name="Soerensen S.A."/>
            <person name="Gydesen S."/>
            <person name="Fisher E.M.C."/>
            <person name="Collinge J."/>
        </authorList>
    </citation>
    <scope>TISSUE SPECIFICITY</scope>
</reference>
<reference key="4">
    <citation type="journal article" date="2007" name="Proc. Natl. Acad. Sci. U.S.A.">
        <title>Large-scale phosphorylation analysis of mouse liver.</title>
        <authorList>
            <person name="Villen J."/>
            <person name="Beausoleil S.A."/>
            <person name="Gerber S.A."/>
            <person name="Gygi S.P."/>
        </authorList>
    </citation>
    <scope>PHOSPHORYLATION [LARGE SCALE ANALYSIS] AT SER-199</scope>
    <scope>IDENTIFICATION BY MASS SPECTROMETRY [LARGE SCALE ANALYSIS]</scope>
    <source>
        <tissue>Liver</tissue>
    </source>
</reference>
<reference key="5">
    <citation type="journal article" date="2009" name="Immunity">
        <title>The phagosomal proteome in interferon-gamma-activated macrophages.</title>
        <authorList>
            <person name="Trost M."/>
            <person name="English L."/>
            <person name="Lemieux S."/>
            <person name="Courcelles M."/>
            <person name="Desjardins M."/>
            <person name="Thibault P."/>
        </authorList>
    </citation>
    <scope>PHOSPHORYLATION [LARGE SCALE ANALYSIS] AT SER-199</scope>
    <scope>IDENTIFICATION BY MASS SPECTROMETRY [LARGE SCALE ANALYSIS]</scope>
</reference>
<reference key="6">
    <citation type="journal article" date="2010" name="Cell">
        <title>A tissue-specific atlas of mouse protein phosphorylation and expression.</title>
        <authorList>
            <person name="Huttlin E.L."/>
            <person name="Jedrychowski M.P."/>
            <person name="Elias J.E."/>
            <person name="Goswami T."/>
            <person name="Rad R."/>
            <person name="Beausoleil S.A."/>
            <person name="Villen J."/>
            <person name="Haas W."/>
            <person name="Sowa M.E."/>
            <person name="Gygi S.P."/>
        </authorList>
    </citation>
    <scope>PHOSPHORYLATION [LARGE SCALE ANALYSIS] AT SER-199</scope>
    <scope>IDENTIFICATION BY MASS SPECTROMETRY [LARGE SCALE ANALYSIS]</scope>
    <source>
        <tissue>Brain</tissue>
        <tissue>Brown adipose tissue</tissue>
        <tissue>Heart</tissue>
        <tissue>Lung</tissue>
        <tissue>Pancreas</tissue>
        <tissue>Testis</tissue>
    </source>
</reference>
<protein>
    <recommendedName>
        <fullName>Charged multivesicular body protein 2b</fullName>
    </recommendedName>
    <alternativeName>
        <fullName>Chromatin-modifying protein 2b</fullName>
        <shortName>CHMP2b</shortName>
    </alternativeName>
</protein>
<organism>
    <name type="scientific">Mus musculus</name>
    <name type="common">Mouse</name>
    <dbReference type="NCBI Taxonomy" id="10090"/>
    <lineage>
        <taxon>Eukaryota</taxon>
        <taxon>Metazoa</taxon>
        <taxon>Chordata</taxon>
        <taxon>Craniata</taxon>
        <taxon>Vertebrata</taxon>
        <taxon>Euteleostomi</taxon>
        <taxon>Mammalia</taxon>
        <taxon>Eutheria</taxon>
        <taxon>Euarchontoglires</taxon>
        <taxon>Glires</taxon>
        <taxon>Rodentia</taxon>
        <taxon>Myomorpha</taxon>
        <taxon>Muroidea</taxon>
        <taxon>Muridae</taxon>
        <taxon>Murinae</taxon>
        <taxon>Mus</taxon>
        <taxon>Mus</taxon>
    </lineage>
</organism>
<accession>Q8BJF9</accession>
<accession>Q80UZ4</accession>
<accession>Q9CT65</accession>
<name>CHM2B_MOUSE</name>
<proteinExistence type="evidence at protein level"/>
<gene>
    <name type="primary">Chmp2b</name>
</gene>
<sequence length="213" mass="23935">MASLFKKKTVDDVIKEQNRELRGTQRAIIRDRAALEKQEKQLELEIKKMAKIGNKEACRVLAKQLVHLRKQKTRTFAVSSKVTSMSTQTKVMNSQMKMAGAMSTTAKTMQAVNKKMDPQKTLQTMQNFQKENMKMEMTEEMINDTLDDIFDGSDDEEESQDIVNQVLDEIGIEISGKMAKAPSAARSLPSASTSKATISDEEIERQLKALGVD</sequence>
<dbReference type="EMBL" id="AK004506">
    <property type="protein sequence ID" value="BAB23339.1"/>
    <property type="molecule type" value="mRNA"/>
</dbReference>
<dbReference type="EMBL" id="AK084111">
    <property type="protein sequence ID" value="BAC39118.1"/>
    <property type="molecule type" value="mRNA"/>
</dbReference>
<dbReference type="EMBL" id="BC042626">
    <property type="protein sequence ID" value="AAH42626.1"/>
    <property type="molecule type" value="mRNA"/>
</dbReference>
<dbReference type="EMBL" id="BC055809">
    <property type="protein sequence ID" value="AAH55809.1"/>
    <property type="molecule type" value="mRNA"/>
</dbReference>
<dbReference type="CCDS" id="CCDS28269.1"/>
<dbReference type="RefSeq" id="NP_081155.1">
    <property type="nucleotide sequence ID" value="NM_026879.3"/>
</dbReference>
<dbReference type="SMR" id="Q8BJF9"/>
<dbReference type="BioGRID" id="213128">
    <property type="interactions" value="11"/>
</dbReference>
<dbReference type="ComplexPortal" id="CPX-332">
    <property type="entry name" value="ESCRT-III complex, variant Chmp1b1"/>
</dbReference>
<dbReference type="ComplexPortal" id="CPX-333">
    <property type="entry name" value="ESCRT-III complex, variant Chmp1b2"/>
</dbReference>
<dbReference type="FunCoup" id="Q8BJF9">
    <property type="interactions" value="1845"/>
</dbReference>
<dbReference type="IntAct" id="Q8BJF9">
    <property type="interactions" value="2"/>
</dbReference>
<dbReference type="MINT" id="Q8BJF9"/>
<dbReference type="STRING" id="10090.ENSMUSP00000004965"/>
<dbReference type="iPTMnet" id="Q8BJF9"/>
<dbReference type="PhosphoSitePlus" id="Q8BJF9"/>
<dbReference type="SwissPalm" id="Q8BJF9"/>
<dbReference type="jPOST" id="Q8BJF9"/>
<dbReference type="PaxDb" id="10090-ENSMUSP00000004965"/>
<dbReference type="PeptideAtlas" id="Q8BJF9"/>
<dbReference type="ProteomicsDB" id="281556"/>
<dbReference type="Pumba" id="Q8BJF9"/>
<dbReference type="Antibodypedia" id="32034">
    <property type="antibodies" value="280 antibodies from 34 providers"/>
</dbReference>
<dbReference type="Ensembl" id="ENSMUST00000004965.8">
    <property type="protein sequence ID" value="ENSMUSP00000004965.7"/>
    <property type="gene ID" value="ENSMUSG00000004843.8"/>
</dbReference>
<dbReference type="GeneID" id="68942"/>
<dbReference type="KEGG" id="mmu:68942"/>
<dbReference type="UCSC" id="uc007zqj.1">
    <property type="organism name" value="mouse"/>
</dbReference>
<dbReference type="AGR" id="MGI:1916192"/>
<dbReference type="CTD" id="25978"/>
<dbReference type="MGI" id="MGI:1916192">
    <property type="gene designation" value="Chmp2b"/>
</dbReference>
<dbReference type="VEuPathDB" id="HostDB:ENSMUSG00000004843"/>
<dbReference type="eggNOG" id="KOG3231">
    <property type="taxonomic scope" value="Eukaryota"/>
</dbReference>
<dbReference type="GeneTree" id="ENSGT00950000182832"/>
<dbReference type="HOGENOM" id="CLU_069208_1_2_1"/>
<dbReference type="InParanoid" id="Q8BJF9"/>
<dbReference type="OMA" id="EIMRMEM"/>
<dbReference type="OrthoDB" id="5594417at2759"/>
<dbReference type="PhylomeDB" id="Q8BJF9"/>
<dbReference type="TreeFam" id="TF314163"/>
<dbReference type="Reactome" id="R-MMU-1632852">
    <property type="pathway name" value="Macroautophagy"/>
</dbReference>
<dbReference type="Reactome" id="R-MMU-5620971">
    <property type="pathway name" value="Pyroptosis"/>
</dbReference>
<dbReference type="Reactome" id="R-MMU-917729">
    <property type="pathway name" value="Endosomal Sorting Complex Required For Transport (ESCRT)"/>
</dbReference>
<dbReference type="Reactome" id="R-MMU-9668328">
    <property type="pathway name" value="Sealing of the nuclear envelope (NE) by ESCRT-III"/>
</dbReference>
<dbReference type="BioGRID-ORCS" id="68942">
    <property type="hits" value="4 hits in 77 CRISPR screens"/>
</dbReference>
<dbReference type="ChiTaRS" id="Chmp2b">
    <property type="organism name" value="mouse"/>
</dbReference>
<dbReference type="PRO" id="PR:Q8BJF9"/>
<dbReference type="Proteomes" id="UP000000589">
    <property type="component" value="Chromosome 16"/>
</dbReference>
<dbReference type="RNAct" id="Q8BJF9">
    <property type="molecule type" value="protein"/>
</dbReference>
<dbReference type="Bgee" id="ENSMUSG00000004843">
    <property type="expression patterns" value="Expressed in spermatocyte and 242 other cell types or tissues"/>
</dbReference>
<dbReference type="ExpressionAtlas" id="Q8BJF9">
    <property type="expression patterns" value="baseline and differential"/>
</dbReference>
<dbReference type="GO" id="GO:1904930">
    <property type="term" value="C:amphisome membrane"/>
    <property type="evidence" value="ECO:0000266"/>
    <property type="project" value="ComplexPortal"/>
</dbReference>
<dbReference type="GO" id="GO:0000421">
    <property type="term" value="C:autophagosome membrane"/>
    <property type="evidence" value="ECO:0000266"/>
    <property type="project" value="ComplexPortal"/>
</dbReference>
<dbReference type="GO" id="GO:0005829">
    <property type="term" value="C:cytosol"/>
    <property type="evidence" value="ECO:0007669"/>
    <property type="project" value="UniProtKB-SubCell"/>
</dbReference>
<dbReference type="GO" id="GO:0000815">
    <property type="term" value="C:ESCRT III complex"/>
    <property type="evidence" value="ECO:0007669"/>
    <property type="project" value="Ensembl"/>
</dbReference>
<dbReference type="GO" id="GO:0098978">
    <property type="term" value="C:glutamatergic synapse"/>
    <property type="evidence" value="ECO:0007669"/>
    <property type="project" value="Ensembl"/>
</dbReference>
<dbReference type="GO" id="GO:0000776">
    <property type="term" value="C:kinetochore"/>
    <property type="evidence" value="ECO:0000266"/>
    <property type="project" value="ComplexPortal"/>
</dbReference>
<dbReference type="GO" id="GO:0005828">
    <property type="term" value="C:kinetochore microtubule"/>
    <property type="evidence" value="ECO:0000266"/>
    <property type="project" value="ComplexPortal"/>
</dbReference>
<dbReference type="GO" id="GO:0005765">
    <property type="term" value="C:lysosomal membrane"/>
    <property type="evidence" value="ECO:0000266"/>
    <property type="project" value="ComplexPortal"/>
</dbReference>
<dbReference type="GO" id="GO:0030496">
    <property type="term" value="C:midbody"/>
    <property type="evidence" value="ECO:0000266"/>
    <property type="project" value="ComplexPortal"/>
</dbReference>
<dbReference type="GO" id="GO:0032585">
    <property type="term" value="C:multivesicular body membrane"/>
    <property type="evidence" value="ECO:0000266"/>
    <property type="project" value="ComplexPortal"/>
</dbReference>
<dbReference type="GO" id="GO:0005643">
    <property type="term" value="C:nuclear pore"/>
    <property type="evidence" value="ECO:0000266"/>
    <property type="project" value="ComplexPortal"/>
</dbReference>
<dbReference type="GO" id="GO:0005886">
    <property type="term" value="C:plasma membrane"/>
    <property type="evidence" value="ECO:0000266"/>
    <property type="project" value="ComplexPortal"/>
</dbReference>
<dbReference type="GO" id="GO:0014069">
    <property type="term" value="C:postsynaptic density"/>
    <property type="evidence" value="ECO:0007669"/>
    <property type="project" value="Ensembl"/>
</dbReference>
<dbReference type="GO" id="GO:0019904">
    <property type="term" value="F:protein domain specific binding"/>
    <property type="evidence" value="ECO:0007669"/>
    <property type="project" value="Ensembl"/>
</dbReference>
<dbReference type="GO" id="GO:0097352">
    <property type="term" value="P:autophagosome maturation"/>
    <property type="evidence" value="ECO:0000266"/>
    <property type="project" value="ComplexPortal"/>
</dbReference>
<dbReference type="GO" id="GO:0006914">
    <property type="term" value="P:autophagy"/>
    <property type="evidence" value="ECO:0000266"/>
    <property type="project" value="ComplexPortal"/>
</dbReference>
<dbReference type="GO" id="GO:0050890">
    <property type="term" value="P:cognition"/>
    <property type="evidence" value="ECO:0007669"/>
    <property type="project" value="Ensembl"/>
</dbReference>
<dbReference type="GO" id="GO:1902774">
    <property type="term" value="P:late endosome to lysosome transport"/>
    <property type="evidence" value="ECO:0000266"/>
    <property type="project" value="ComplexPortal"/>
</dbReference>
<dbReference type="GO" id="GO:0090148">
    <property type="term" value="P:membrane fission"/>
    <property type="evidence" value="ECO:0000303"/>
    <property type="project" value="ComplexPortal"/>
</dbReference>
<dbReference type="GO" id="GO:0061952">
    <property type="term" value="P:midbody abscission"/>
    <property type="evidence" value="ECO:0000266"/>
    <property type="project" value="ComplexPortal"/>
</dbReference>
<dbReference type="GO" id="GO:0007080">
    <property type="term" value="P:mitotic metaphase chromosome alignment"/>
    <property type="evidence" value="ECO:0000266"/>
    <property type="project" value="ComplexPortal"/>
</dbReference>
<dbReference type="GO" id="GO:0050804">
    <property type="term" value="P:modulation of chemical synaptic transmission"/>
    <property type="evidence" value="ECO:0007669"/>
    <property type="project" value="Ensembl"/>
</dbReference>
<dbReference type="GO" id="GO:0036258">
    <property type="term" value="P:multivesicular body assembly"/>
    <property type="evidence" value="ECO:0000303"/>
    <property type="project" value="ComplexPortal"/>
</dbReference>
<dbReference type="GO" id="GO:0071985">
    <property type="term" value="P:multivesicular body sorting pathway"/>
    <property type="evidence" value="ECO:0000266"/>
    <property type="project" value="ComplexPortal"/>
</dbReference>
<dbReference type="GO" id="GO:0061763">
    <property type="term" value="P:multivesicular body-lysosome fusion"/>
    <property type="evidence" value="ECO:0000303"/>
    <property type="project" value="ComplexPortal"/>
</dbReference>
<dbReference type="GO" id="GO:0070050">
    <property type="term" value="P:neuron cellular homeostasis"/>
    <property type="evidence" value="ECO:0007669"/>
    <property type="project" value="Ensembl"/>
</dbReference>
<dbReference type="GO" id="GO:0031468">
    <property type="term" value="P:nuclear membrane reassembly"/>
    <property type="evidence" value="ECO:0000266"/>
    <property type="project" value="ComplexPortal"/>
</dbReference>
<dbReference type="GO" id="GO:0006997">
    <property type="term" value="P:nucleus organization"/>
    <property type="evidence" value="ECO:0000266"/>
    <property type="project" value="ComplexPortal"/>
</dbReference>
<dbReference type="GO" id="GO:0001778">
    <property type="term" value="P:plasma membrane repair"/>
    <property type="evidence" value="ECO:0000266"/>
    <property type="project" value="ComplexPortal"/>
</dbReference>
<dbReference type="GO" id="GO:0015031">
    <property type="term" value="P:protein transport"/>
    <property type="evidence" value="ECO:0007669"/>
    <property type="project" value="UniProtKB-KW"/>
</dbReference>
<dbReference type="GO" id="GO:0010824">
    <property type="term" value="P:regulation of centrosome duplication"/>
    <property type="evidence" value="ECO:0007669"/>
    <property type="project" value="Ensembl"/>
</dbReference>
<dbReference type="GO" id="GO:1901673">
    <property type="term" value="P:regulation of mitotic spindle assembly"/>
    <property type="evidence" value="ECO:0000266"/>
    <property type="project" value="ComplexPortal"/>
</dbReference>
<dbReference type="GO" id="GO:0099159">
    <property type="term" value="P:regulation of modification of postsynaptic structure"/>
    <property type="evidence" value="ECO:0007669"/>
    <property type="project" value="Ensembl"/>
</dbReference>
<dbReference type="GO" id="GO:0099175">
    <property type="term" value="P:regulation of postsynapse organization"/>
    <property type="evidence" value="ECO:0007669"/>
    <property type="project" value="Ensembl"/>
</dbReference>
<dbReference type="GO" id="GO:0043162">
    <property type="term" value="P:ubiquitin-dependent protein catabolic process via the multivesicular body sorting pathway"/>
    <property type="evidence" value="ECO:0000266"/>
    <property type="project" value="ComplexPortal"/>
</dbReference>
<dbReference type="GO" id="GO:0051469">
    <property type="term" value="P:vesicle fusion with vacuole"/>
    <property type="evidence" value="ECO:0000303"/>
    <property type="project" value="ComplexPortal"/>
</dbReference>
<dbReference type="GO" id="GO:0046761">
    <property type="term" value="P:viral budding from plasma membrane"/>
    <property type="evidence" value="ECO:0000266"/>
    <property type="project" value="ComplexPortal"/>
</dbReference>
<dbReference type="GO" id="GO:0039702">
    <property type="term" value="P:viral budding via host ESCRT complex"/>
    <property type="evidence" value="ECO:0000266"/>
    <property type="project" value="ComplexPortal"/>
</dbReference>
<dbReference type="Gene3D" id="6.10.140.1230">
    <property type="match status" value="1"/>
</dbReference>
<dbReference type="InterPro" id="IPR005024">
    <property type="entry name" value="Snf7_fam"/>
</dbReference>
<dbReference type="PANTHER" id="PTHR10476">
    <property type="entry name" value="CHARGED MULTIVESICULAR BODY PROTEIN"/>
    <property type="match status" value="1"/>
</dbReference>
<dbReference type="Pfam" id="PF03357">
    <property type="entry name" value="Snf7"/>
    <property type="match status" value="1"/>
</dbReference>
<evidence type="ECO:0000250" key="1"/>
<evidence type="ECO:0000250" key="2">
    <source>
        <dbReference type="UniProtKB" id="Q9UQN3"/>
    </source>
</evidence>
<evidence type="ECO:0000255" key="3"/>
<evidence type="ECO:0000256" key="4">
    <source>
        <dbReference type="SAM" id="MobiDB-lite"/>
    </source>
</evidence>
<evidence type="ECO:0000269" key="5">
    <source>
    </source>
</evidence>
<evidence type="ECO:0000305" key="6"/>
<evidence type="ECO:0007744" key="7">
    <source>
    </source>
</evidence>
<evidence type="ECO:0007744" key="8">
    <source>
    </source>
</evidence>
<evidence type="ECO:0007744" key="9">
    <source>
    </source>
</evidence>
<keyword id="KW-0007">Acetylation</keyword>
<keyword id="KW-0175">Coiled coil</keyword>
<keyword id="KW-0963">Cytoplasm</keyword>
<keyword id="KW-0967">Endosome</keyword>
<keyword id="KW-0472">Membrane</keyword>
<keyword id="KW-0597">Phosphoprotein</keyword>
<keyword id="KW-0653">Protein transport</keyword>
<keyword id="KW-1185">Reference proteome</keyword>
<keyword id="KW-0813">Transport</keyword>
<comment type="function">
    <text evidence="1">Probable core component of the endosomal sorting required for transport complex III (ESCRT-III) which is involved in multivesicular bodies (MVBs) formation and sorting of endosomal cargo proteins into MVBs. MVBs contain intraluminal vesicles (ILVs) that are generated by invagination and scission from the limiting membrane of the endosome and mostly are delivered to lysosomes enabling degradation of membrane proteins, such as stimulated growth factor receptors, lysosomal enzymes and lipids. The MVB pathway appears to require the sequential function of ESCRT-O, -I,-II and -III complexes. ESCRT-III proteins mostly dissociate from the invaginating membrane before the ILV is released. The ESCRT machinery also functions in topologically equivalent membrane fission events, such as the terminal stages of cytokinesis. ESCRT-III proteins are believed to mediate the necessary vesicle extrusion and/or membrane fission activities, possibly in conjunction with the AAA ATPase VPS4 (By similarity).</text>
</comment>
<comment type="subunit">
    <text evidence="1">Probable core component of the endosomal sorting required for transport complex III (ESCRT-III). ESCRT-III components are thought to multimerize to form a flat lattice on the perimeter membrane of the endosome. Several assembly forms of ESCRT-III may exist that interact and act sequentially. Interacts with CHMP2A. Interacts with VPS4A. Interacts with VPS4B; the interaction is direct (By similarity).</text>
</comment>
<comment type="subcellular location">
    <subcellularLocation>
        <location evidence="1">Cytoplasm</location>
        <location evidence="1">Cytosol</location>
    </subcellularLocation>
    <subcellularLocation>
        <location evidence="1">Late endosome membrane</location>
        <topology evidence="1">Peripheral membrane protein</topology>
    </subcellularLocation>
</comment>
<comment type="tissue specificity">
    <text evidence="5">In brain, it is expressed in all neuronal populations with a relatively enhanced expression in the hippocampus, frontal and temporal lobes and in both granule and Purkinje cells of the cerebellum. Not expressed in astrocytes or oligodendrocytes.</text>
</comment>
<comment type="similarity">
    <text evidence="6">Belongs to the SNF7 family.</text>
</comment>